<evidence type="ECO:0000255" key="1">
    <source>
        <dbReference type="HAMAP-Rule" id="MF_00137"/>
    </source>
</evidence>
<gene>
    <name evidence="1" type="primary">purC</name>
    <name type="ordered locus">Swit_0102</name>
</gene>
<protein>
    <recommendedName>
        <fullName evidence="1">Phosphoribosylaminoimidazole-succinocarboxamide synthase</fullName>
        <ecNumber evidence="1">6.3.2.6</ecNumber>
    </recommendedName>
    <alternativeName>
        <fullName evidence="1">SAICAR synthetase</fullName>
    </alternativeName>
</protein>
<sequence length="258" mass="29449">MTRRRQIYEGKAKILYEGPEPGTLIQYFKDDATAFNAQKKGTINGKGVLNNRISEHIFTMLGTIGVATHFIRRLNMREQLIRQVEIVPIEVVVRNVAAGSLTKRLGIEEGTQLPRTIIEYYYKDDALGDPMVADEHIACFGWASQEEMHDIADMAIRVNDFMCGLFAGIGIRLVDFKLEFGRFWDNDYSRVILADEISPDGCRLWDMATGEKLDKDRFRQDLGGEVEAYQEIARRLGLMPDGENMILDLESHRKNRGK</sequence>
<reference key="1">
    <citation type="journal article" date="2010" name="J. Bacteriol.">
        <title>Genome sequence of the dioxin-mineralizing bacterium Sphingomonas wittichii RW1.</title>
        <authorList>
            <person name="Miller T.R."/>
            <person name="Delcher A.L."/>
            <person name="Salzberg S.L."/>
            <person name="Saunders E."/>
            <person name="Detter J.C."/>
            <person name="Halden R.U."/>
        </authorList>
    </citation>
    <scope>NUCLEOTIDE SEQUENCE [LARGE SCALE GENOMIC DNA]</scope>
    <source>
        <strain>DSM 6014 / CCUG 31198 / JCM 15750 / NBRC 105917 / EY 4224 / RW1</strain>
    </source>
</reference>
<dbReference type="EC" id="6.3.2.6" evidence="1"/>
<dbReference type="EMBL" id="CP000699">
    <property type="protein sequence ID" value="ABQ66474.1"/>
    <property type="molecule type" value="Genomic_DNA"/>
</dbReference>
<dbReference type="SMR" id="A5V2F8"/>
<dbReference type="STRING" id="392499.Swit_0102"/>
<dbReference type="PaxDb" id="392499-Swit_0102"/>
<dbReference type="KEGG" id="swi:Swit_0102"/>
<dbReference type="eggNOG" id="COG0152">
    <property type="taxonomic scope" value="Bacteria"/>
</dbReference>
<dbReference type="HOGENOM" id="CLU_061495_2_0_5"/>
<dbReference type="OrthoDB" id="9801549at2"/>
<dbReference type="UniPathway" id="UPA00074">
    <property type="reaction ID" value="UER00131"/>
</dbReference>
<dbReference type="Proteomes" id="UP000001989">
    <property type="component" value="Chromosome"/>
</dbReference>
<dbReference type="GO" id="GO:0005829">
    <property type="term" value="C:cytosol"/>
    <property type="evidence" value="ECO:0007669"/>
    <property type="project" value="TreeGrafter"/>
</dbReference>
<dbReference type="GO" id="GO:0005524">
    <property type="term" value="F:ATP binding"/>
    <property type="evidence" value="ECO:0007669"/>
    <property type="project" value="UniProtKB-KW"/>
</dbReference>
<dbReference type="GO" id="GO:0004639">
    <property type="term" value="F:phosphoribosylaminoimidazolesuccinocarboxamide synthase activity"/>
    <property type="evidence" value="ECO:0007669"/>
    <property type="project" value="UniProtKB-UniRule"/>
</dbReference>
<dbReference type="GO" id="GO:0006189">
    <property type="term" value="P:'de novo' IMP biosynthetic process"/>
    <property type="evidence" value="ECO:0007669"/>
    <property type="project" value="UniProtKB-UniRule"/>
</dbReference>
<dbReference type="GO" id="GO:0009236">
    <property type="term" value="P:cobalamin biosynthetic process"/>
    <property type="evidence" value="ECO:0007669"/>
    <property type="project" value="InterPro"/>
</dbReference>
<dbReference type="CDD" id="cd01415">
    <property type="entry name" value="SAICAR_synt_PurC"/>
    <property type="match status" value="1"/>
</dbReference>
<dbReference type="FunFam" id="3.30.470.20:FF:000006">
    <property type="entry name" value="Phosphoribosylaminoimidazole-succinocarboxamide synthase"/>
    <property type="match status" value="1"/>
</dbReference>
<dbReference type="Gene3D" id="3.30.470.20">
    <property type="entry name" value="ATP-grasp fold, B domain"/>
    <property type="match status" value="1"/>
</dbReference>
<dbReference type="Gene3D" id="3.30.200.20">
    <property type="entry name" value="Phosphorylase Kinase, domain 1"/>
    <property type="match status" value="1"/>
</dbReference>
<dbReference type="HAMAP" id="MF_00137">
    <property type="entry name" value="SAICAR_synth"/>
    <property type="match status" value="1"/>
</dbReference>
<dbReference type="InterPro" id="IPR028923">
    <property type="entry name" value="SAICAR_synt/ADE2_N"/>
</dbReference>
<dbReference type="InterPro" id="IPR033934">
    <property type="entry name" value="SAICAR_synt_PurC"/>
</dbReference>
<dbReference type="InterPro" id="IPR001636">
    <property type="entry name" value="SAICAR_synth"/>
</dbReference>
<dbReference type="InterPro" id="IPR050089">
    <property type="entry name" value="SAICAR_synthetase"/>
</dbReference>
<dbReference type="InterPro" id="IPR018236">
    <property type="entry name" value="SAICAR_synthetase_CS"/>
</dbReference>
<dbReference type="NCBIfam" id="TIGR00081">
    <property type="entry name" value="purC"/>
    <property type="match status" value="1"/>
</dbReference>
<dbReference type="PANTHER" id="PTHR43599">
    <property type="entry name" value="MULTIFUNCTIONAL PROTEIN ADE2"/>
    <property type="match status" value="1"/>
</dbReference>
<dbReference type="PANTHER" id="PTHR43599:SF3">
    <property type="entry name" value="SI:DKEY-6E2.2"/>
    <property type="match status" value="1"/>
</dbReference>
<dbReference type="Pfam" id="PF01259">
    <property type="entry name" value="SAICAR_synt"/>
    <property type="match status" value="1"/>
</dbReference>
<dbReference type="SUPFAM" id="SSF56104">
    <property type="entry name" value="SAICAR synthase-like"/>
    <property type="match status" value="1"/>
</dbReference>
<dbReference type="PROSITE" id="PS01057">
    <property type="entry name" value="SAICAR_SYNTHETASE_1"/>
    <property type="match status" value="1"/>
</dbReference>
<dbReference type="PROSITE" id="PS01058">
    <property type="entry name" value="SAICAR_SYNTHETASE_2"/>
    <property type="match status" value="1"/>
</dbReference>
<comment type="catalytic activity">
    <reaction evidence="1">
        <text>5-amino-1-(5-phospho-D-ribosyl)imidazole-4-carboxylate + L-aspartate + ATP = (2S)-2-[5-amino-1-(5-phospho-beta-D-ribosyl)imidazole-4-carboxamido]succinate + ADP + phosphate + 2 H(+)</text>
        <dbReference type="Rhea" id="RHEA:22628"/>
        <dbReference type="ChEBI" id="CHEBI:15378"/>
        <dbReference type="ChEBI" id="CHEBI:29991"/>
        <dbReference type="ChEBI" id="CHEBI:30616"/>
        <dbReference type="ChEBI" id="CHEBI:43474"/>
        <dbReference type="ChEBI" id="CHEBI:58443"/>
        <dbReference type="ChEBI" id="CHEBI:77657"/>
        <dbReference type="ChEBI" id="CHEBI:456216"/>
        <dbReference type="EC" id="6.3.2.6"/>
    </reaction>
</comment>
<comment type="pathway">
    <text evidence="1">Purine metabolism; IMP biosynthesis via de novo pathway; 5-amino-1-(5-phospho-D-ribosyl)imidazole-4-carboxamide from 5-amino-1-(5-phospho-D-ribosyl)imidazole-4-carboxylate: step 1/2.</text>
</comment>
<comment type="similarity">
    <text evidence="1">Belongs to the SAICAR synthetase family.</text>
</comment>
<feature type="chain" id="PRO_1000018785" description="Phosphoribosylaminoimidazole-succinocarboxamide synthase">
    <location>
        <begin position="1"/>
        <end position="258"/>
    </location>
</feature>
<name>PUR7_RHIWR</name>
<accession>A5V2F8</accession>
<keyword id="KW-0067">ATP-binding</keyword>
<keyword id="KW-0436">Ligase</keyword>
<keyword id="KW-0547">Nucleotide-binding</keyword>
<keyword id="KW-0658">Purine biosynthesis</keyword>
<keyword id="KW-1185">Reference proteome</keyword>
<organism>
    <name type="scientific">Rhizorhabdus wittichii (strain DSM 6014 / CCUG 31198 / JCM 15750 / NBRC 105917 / EY 4224 / RW1)</name>
    <name type="common">Sphingomonas wittichii</name>
    <dbReference type="NCBI Taxonomy" id="392499"/>
    <lineage>
        <taxon>Bacteria</taxon>
        <taxon>Pseudomonadati</taxon>
        <taxon>Pseudomonadota</taxon>
        <taxon>Alphaproteobacteria</taxon>
        <taxon>Sphingomonadales</taxon>
        <taxon>Sphingomonadaceae</taxon>
        <taxon>Rhizorhabdus</taxon>
    </lineage>
</organism>
<proteinExistence type="inferred from homology"/>